<protein>
    <recommendedName>
        <fullName evidence="1">Holin-like protein CidA</fullName>
    </recommendedName>
</protein>
<name>CIDA_STAAS</name>
<evidence type="ECO:0000255" key="1">
    <source>
        <dbReference type="HAMAP-Rule" id="MF_01143"/>
    </source>
</evidence>
<accession>Q6G6D3</accession>
<proteinExistence type="inferred from homology"/>
<dbReference type="EMBL" id="BX571857">
    <property type="protein sequence ID" value="CAG44243.1"/>
    <property type="molecule type" value="Genomic_DNA"/>
</dbReference>
<dbReference type="RefSeq" id="WP_000549734.1">
    <property type="nucleotide sequence ID" value="NC_002953.3"/>
</dbReference>
<dbReference type="SMR" id="Q6G6D3"/>
<dbReference type="KEGG" id="sas:SAS2427"/>
<dbReference type="HOGENOM" id="CLU_113736_2_1_9"/>
<dbReference type="GO" id="GO:0005886">
    <property type="term" value="C:plasma membrane"/>
    <property type="evidence" value="ECO:0007669"/>
    <property type="project" value="UniProtKB-SubCell"/>
</dbReference>
<dbReference type="GO" id="GO:0019835">
    <property type="term" value="P:cytolysis"/>
    <property type="evidence" value="ECO:0007669"/>
    <property type="project" value="UniProtKB-UniRule"/>
</dbReference>
<dbReference type="GO" id="GO:0031640">
    <property type="term" value="P:killing of cells of another organism"/>
    <property type="evidence" value="ECO:0007669"/>
    <property type="project" value="UniProtKB-KW"/>
</dbReference>
<dbReference type="GO" id="GO:0012501">
    <property type="term" value="P:programmed cell death"/>
    <property type="evidence" value="ECO:0007669"/>
    <property type="project" value="UniProtKB-UniRule"/>
</dbReference>
<dbReference type="HAMAP" id="MF_01143">
    <property type="entry name" value="CidA"/>
    <property type="match status" value="1"/>
</dbReference>
<dbReference type="InterPro" id="IPR023760">
    <property type="entry name" value="Holin-like_CidA"/>
</dbReference>
<dbReference type="InterPro" id="IPR005538">
    <property type="entry name" value="LrgA/CidA"/>
</dbReference>
<dbReference type="PANTHER" id="PTHR33931:SF2">
    <property type="entry name" value="HOLIN-LIKE PROTEIN CIDA"/>
    <property type="match status" value="1"/>
</dbReference>
<dbReference type="PANTHER" id="PTHR33931">
    <property type="entry name" value="HOLIN-LIKE PROTEIN CIDA-RELATED"/>
    <property type="match status" value="1"/>
</dbReference>
<dbReference type="Pfam" id="PF03788">
    <property type="entry name" value="LrgA"/>
    <property type="match status" value="1"/>
</dbReference>
<feature type="chain" id="PRO_0000213182" description="Holin-like protein CidA">
    <location>
        <begin position="1"/>
        <end position="131"/>
    </location>
</feature>
<feature type="transmembrane region" description="Helical" evidence="1">
    <location>
        <begin position="4"/>
        <end position="24"/>
    </location>
</feature>
<feature type="transmembrane region" description="Helical" evidence="1">
    <location>
        <begin position="30"/>
        <end position="50"/>
    </location>
</feature>
<feature type="transmembrane region" description="Helical" evidence="1">
    <location>
        <begin position="65"/>
        <end position="85"/>
    </location>
</feature>
<feature type="transmembrane region" description="Helical" evidence="1">
    <location>
        <begin position="88"/>
        <end position="108"/>
    </location>
</feature>
<comment type="function">
    <text evidence="1">Increases the activity of extracellular murein hydrolases possibly by mediating their export via hole formation. Inhibited by the antiholin-like proteins LrgAB. In an unstressed cell, the LrgAB products probably inhibit the function of the CidAB proteins. When a cell is stressed by the addition of antibiotics or by other factors in the environment, the CidAB proteins possibly oligomerize within the bacterial cell membrane, creating lesions that disrupt the proton motive force, which in turn results in loss of cell viability. These lesions are also hypothesized to regulate the subsequent cell lysis by either allowing the murein hydrolases access to the cell wall substrate and/or regulating their activity by a possible change in the cell wall pH that results from loss of membrane potential.</text>
</comment>
<comment type="subcellular location">
    <subcellularLocation>
        <location evidence="1">Cell membrane</location>
        <topology evidence="1">Multi-pass membrane protein</topology>
    </subcellularLocation>
</comment>
<comment type="similarity">
    <text evidence="1">Belongs to the CidA/LrgA family. CidA subfamily.</text>
</comment>
<gene>
    <name evidence="1" type="primary">cidA</name>
    <name type="ordered locus">SAS2427</name>
</gene>
<organism>
    <name type="scientific">Staphylococcus aureus (strain MSSA476)</name>
    <dbReference type="NCBI Taxonomy" id="282459"/>
    <lineage>
        <taxon>Bacteria</taxon>
        <taxon>Bacillati</taxon>
        <taxon>Bacillota</taxon>
        <taxon>Bacilli</taxon>
        <taxon>Bacillales</taxon>
        <taxon>Staphylococcaceae</taxon>
        <taxon>Staphylococcus</taxon>
    </lineage>
</organism>
<reference key="1">
    <citation type="journal article" date="2004" name="Proc. Natl. Acad. Sci. U.S.A.">
        <title>Complete genomes of two clinical Staphylococcus aureus strains: evidence for the rapid evolution of virulence and drug resistance.</title>
        <authorList>
            <person name="Holden M.T.G."/>
            <person name="Feil E.J."/>
            <person name="Lindsay J.A."/>
            <person name="Peacock S.J."/>
            <person name="Day N.P.J."/>
            <person name="Enright M.C."/>
            <person name="Foster T.J."/>
            <person name="Moore C.E."/>
            <person name="Hurst L."/>
            <person name="Atkin R."/>
            <person name="Barron A."/>
            <person name="Bason N."/>
            <person name="Bentley S.D."/>
            <person name="Chillingworth C."/>
            <person name="Chillingworth T."/>
            <person name="Churcher C."/>
            <person name="Clark L."/>
            <person name="Corton C."/>
            <person name="Cronin A."/>
            <person name="Doggett J."/>
            <person name="Dowd L."/>
            <person name="Feltwell T."/>
            <person name="Hance Z."/>
            <person name="Harris B."/>
            <person name="Hauser H."/>
            <person name="Holroyd S."/>
            <person name="Jagels K."/>
            <person name="James K.D."/>
            <person name="Lennard N."/>
            <person name="Line A."/>
            <person name="Mayes R."/>
            <person name="Moule S."/>
            <person name="Mungall K."/>
            <person name="Ormond D."/>
            <person name="Quail M.A."/>
            <person name="Rabbinowitsch E."/>
            <person name="Rutherford K.M."/>
            <person name="Sanders M."/>
            <person name="Sharp S."/>
            <person name="Simmonds M."/>
            <person name="Stevens K."/>
            <person name="Whitehead S."/>
            <person name="Barrell B.G."/>
            <person name="Spratt B.G."/>
            <person name="Parkhill J."/>
        </authorList>
    </citation>
    <scope>NUCLEOTIDE SEQUENCE [LARGE SCALE GENOMIC DNA]</scope>
    <source>
        <strain>MSSA476</strain>
    </source>
</reference>
<sequence>MHKVQLIIKLLLQLGIIIVITYIGTEIQKIFHLPLAGSIVGLFLFYLLLQFKIVPLTWVEDGANFLLKTMVFFFIPSVVGIMDVASEITLNYILFFAVIIIGTCIVALSSGYIAEKMSVKHKHRKGVDAYE</sequence>
<keyword id="KW-1003">Cell membrane</keyword>
<keyword id="KW-0204">Cytolysis</keyword>
<keyword id="KW-0472">Membrane</keyword>
<keyword id="KW-0812">Transmembrane</keyword>
<keyword id="KW-1133">Transmembrane helix</keyword>